<name>LIPH_RABIT</name>
<organism>
    <name type="scientific">Oryctolagus cuniculus</name>
    <name type="common">Rabbit</name>
    <dbReference type="NCBI Taxonomy" id="9986"/>
    <lineage>
        <taxon>Eukaryota</taxon>
        <taxon>Metazoa</taxon>
        <taxon>Chordata</taxon>
        <taxon>Craniata</taxon>
        <taxon>Vertebrata</taxon>
        <taxon>Euteleostomi</taxon>
        <taxon>Mammalia</taxon>
        <taxon>Eutheria</taxon>
        <taxon>Euarchontoglires</taxon>
        <taxon>Glires</taxon>
        <taxon>Lagomorpha</taxon>
        <taxon>Leporidae</taxon>
        <taxon>Oryctolagus</taxon>
    </lineage>
</organism>
<keyword id="KW-1003">Cell membrane</keyword>
<keyword id="KW-1015">Disulfide bond</keyword>
<keyword id="KW-0325">Glycoprotein</keyword>
<keyword id="KW-0378">Hydrolase</keyword>
<keyword id="KW-0442">Lipid degradation</keyword>
<keyword id="KW-0443">Lipid metabolism</keyword>
<keyword id="KW-0472">Membrane</keyword>
<keyword id="KW-1185">Reference proteome</keyword>
<keyword id="KW-0964">Secreted</keyword>
<keyword id="KW-0732">Signal</keyword>
<gene>
    <name type="primary">LIPH</name>
</gene>
<comment type="function">
    <text evidence="2">Hydrolyzes specifically phosphatidic acid (PA) to produce 2-acyl lysophosphatidic acid (LPA; a potent bioactive lipid mediator) and fatty acid (By similarity). Does not hydrolyze other phospholipids, like phosphatidylserine (PS), phosphatidylcholine (PC) and phosphatidylethanolamine (PE) or triacylglycerol (TG) (By similarity).</text>
</comment>
<comment type="catalytic activity">
    <reaction evidence="2">
        <text>1-hexadecanoyl-2-(9Z-octadecenoyl)-sn-glycero-3-phosphate + H2O = 2-(9Z-octadecenoyl)-sn-glycero-3-phosphate + hexadecanoate + H(+)</text>
        <dbReference type="Rhea" id="RHEA:40943"/>
        <dbReference type="ChEBI" id="CHEBI:7896"/>
        <dbReference type="ChEBI" id="CHEBI:15377"/>
        <dbReference type="ChEBI" id="CHEBI:15378"/>
        <dbReference type="ChEBI" id="CHEBI:64839"/>
        <dbReference type="ChEBI" id="CHEBI:77593"/>
    </reaction>
    <physiologicalReaction direction="left-to-right" evidence="2">
        <dbReference type="Rhea" id="RHEA:40944"/>
    </physiologicalReaction>
</comment>
<comment type="subunit">
    <text evidence="2">Interacts with TTMP/C3orf52.</text>
</comment>
<comment type="subcellular location">
    <subcellularLocation>
        <location evidence="2">Secreted</location>
    </subcellularLocation>
    <subcellularLocation>
        <location evidence="2">Cell membrane</location>
        <topology>Peripheral membrane protein</topology>
    </subcellularLocation>
</comment>
<comment type="tissue specificity">
    <text>Expressed in liver and lacrimal gland.</text>
</comment>
<comment type="similarity">
    <text evidence="4">Belongs to the AB hydrolase superfamily. Lipase family.</text>
</comment>
<protein>
    <recommendedName>
        <fullName>Lipase member H</fullName>
        <ecNumber>3.1.1.-</ecNumber>
    </recommendedName>
    <alternativeName>
        <fullName>Lacrimal lipase</fullName>
    </alternativeName>
</protein>
<feature type="signal peptide" evidence="3">
    <location>
        <begin position="1"/>
        <end position="16"/>
    </location>
</feature>
<feature type="chain" id="PRO_0000273323" description="Lipase member H">
    <location>
        <begin position="17"/>
        <end position="452"/>
    </location>
</feature>
<feature type="active site" description="Nucleophile" evidence="1">
    <location>
        <position position="154"/>
    </location>
</feature>
<feature type="active site" description="Charge relay system" evidence="1">
    <location>
        <position position="178"/>
    </location>
</feature>
<feature type="active site" description="Charge relay system" evidence="1">
    <location>
        <position position="249"/>
    </location>
</feature>
<feature type="glycosylation site" description="N-linked (GlcNAc...) asparagine" evidence="3">
    <location>
        <position position="50"/>
    </location>
</feature>
<feature type="glycosylation site" description="N-linked (GlcNAc...) asparagine" evidence="3">
    <location>
        <position position="66"/>
    </location>
</feature>
<feature type="glycosylation site" description="N-linked (GlcNAc...) asparagine" evidence="3">
    <location>
        <position position="122"/>
    </location>
</feature>
<feature type="glycosylation site" description="N-linked (GlcNAc...) asparagine" evidence="3">
    <location>
        <position position="263"/>
    </location>
</feature>
<feature type="disulfide bond" evidence="1">
    <location>
        <begin position="233"/>
        <end position="247"/>
    </location>
</feature>
<feature type="disulfide bond" evidence="1">
    <location>
        <begin position="271"/>
        <end position="282"/>
    </location>
</feature>
<feature type="disulfide bond" evidence="1">
    <location>
        <begin position="285"/>
        <end position="293"/>
    </location>
</feature>
<feature type="disulfide bond" evidence="1">
    <location>
        <begin position="428"/>
        <end position="447"/>
    </location>
</feature>
<dbReference type="EC" id="3.1.1.-"/>
<dbReference type="EMBL" id="AF351188">
    <property type="protein sequence ID" value="AAK30250.1"/>
    <property type="molecule type" value="mRNA"/>
</dbReference>
<dbReference type="RefSeq" id="NP_001075575.1">
    <property type="nucleotide sequence ID" value="NM_001082106.1"/>
</dbReference>
<dbReference type="SMR" id="Q9BDJ4"/>
<dbReference type="FunCoup" id="Q9BDJ4">
    <property type="interactions" value="127"/>
</dbReference>
<dbReference type="STRING" id="9986.ENSOCUP00000030384"/>
<dbReference type="ESTHER" id="rabit-LIPH">
    <property type="family name" value="Phospholipase"/>
</dbReference>
<dbReference type="GlyCosmos" id="Q9BDJ4">
    <property type="glycosylation" value="4 sites, No reported glycans"/>
</dbReference>
<dbReference type="PaxDb" id="9986-ENSOCUP00000004368"/>
<dbReference type="GeneID" id="100008812"/>
<dbReference type="KEGG" id="ocu:100008812"/>
<dbReference type="CTD" id="200879"/>
<dbReference type="eggNOG" id="ENOG502QUQT">
    <property type="taxonomic scope" value="Eukaryota"/>
</dbReference>
<dbReference type="InParanoid" id="Q9BDJ4"/>
<dbReference type="OrthoDB" id="199913at2759"/>
<dbReference type="Proteomes" id="UP000001811">
    <property type="component" value="Unplaced"/>
</dbReference>
<dbReference type="GO" id="GO:0005615">
    <property type="term" value="C:extracellular space"/>
    <property type="evidence" value="ECO:0007669"/>
    <property type="project" value="TreeGrafter"/>
</dbReference>
<dbReference type="GO" id="GO:0005886">
    <property type="term" value="C:plasma membrane"/>
    <property type="evidence" value="ECO:0007669"/>
    <property type="project" value="UniProtKB-SubCell"/>
</dbReference>
<dbReference type="GO" id="GO:0052689">
    <property type="term" value="F:carboxylic ester hydrolase activity"/>
    <property type="evidence" value="ECO:0007669"/>
    <property type="project" value="InterPro"/>
</dbReference>
<dbReference type="GO" id="GO:0004620">
    <property type="term" value="F:phospholipase activity"/>
    <property type="evidence" value="ECO:0007669"/>
    <property type="project" value="TreeGrafter"/>
</dbReference>
<dbReference type="GO" id="GO:0016042">
    <property type="term" value="P:lipid catabolic process"/>
    <property type="evidence" value="ECO:0007669"/>
    <property type="project" value="UniProtKB-KW"/>
</dbReference>
<dbReference type="CDD" id="cd00707">
    <property type="entry name" value="Pancreat_lipase_like"/>
    <property type="match status" value="1"/>
</dbReference>
<dbReference type="FunFam" id="3.40.50.1820:FF:000063">
    <property type="entry name" value="Lipase member H"/>
    <property type="match status" value="1"/>
</dbReference>
<dbReference type="Gene3D" id="3.40.50.1820">
    <property type="entry name" value="alpha/beta hydrolase"/>
    <property type="match status" value="1"/>
</dbReference>
<dbReference type="InterPro" id="IPR029058">
    <property type="entry name" value="AB_hydrolase_fold"/>
</dbReference>
<dbReference type="InterPro" id="IPR013818">
    <property type="entry name" value="Lipase"/>
</dbReference>
<dbReference type="InterPro" id="IPR016272">
    <property type="entry name" value="Lipase_LIPH"/>
</dbReference>
<dbReference type="InterPro" id="IPR033906">
    <property type="entry name" value="Lipase_N"/>
</dbReference>
<dbReference type="InterPro" id="IPR000734">
    <property type="entry name" value="TAG_lipase"/>
</dbReference>
<dbReference type="PANTHER" id="PTHR11610">
    <property type="entry name" value="LIPASE"/>
    <property type="match status" value="1"/>
</dbReference>
<dbReference type="PANTHER" id="PTHR11610:SF12">
    <property type="entry name" value="LIPASE MEMBER H"/>
    <property type="match status" value="1"/>
</dbReference>
<dbReference type="Pfam" id="PF00151">
    <property type="entry name" value="Lipase"/>
    <property type="match status" value="1"/>
</dbReference>
<dbReference type="PIRSF" id="PIRSF000865">
    <property type="entry name" value="Lipoprotein_lipase_LIPH"/>
    <property type="match status" value="1"/>
</dbReference>
<dbReference type="PRINTS" id="PR00821">
    <property type="entry name" value="TAGLIPASE"/>
</dbReference>
<dbReference type="SUPFAM" id="SSF53474">
    <property type="entry name" value="alpha/beta-Hydrolases"/>
    <property type="match status" value="1"/>
</dbReference>
<accession>Q9BDJ4</accession>
<sequence length="452" mass="51164">MLRFYLFISLLCLVRSDTDETCPSFTKLSFHSAVVGTELNVRLLLYTRKNYTCAQIINSTTFGNLNVTKKTTFVVHGFRPTGSPPVWLQDLVKALLMVEDMNLVVVDWNRGATTVIYTQASNKTRKVAIILKEFIDQMLARGASLDDIYMIGVSLGAHISGFVGKMYNGQLGRITGLDPAGPLFNGKPPQDRLDPSDAQFVDVIHSDTDALGYKEPLGNIDFYPNGGVDQPGCPKTIFEAGMQYFKCDHQMSVYLYLSSLRKNCTITAYPCDSYRDYRNGKCINCGLPQGKPCPLLGYYADNWKDYLSEKDPPMTKAFFDTAEKEPYCMYHYFVDIITWNKSIRRGSITIKLKDEAGNTTESKINHEPVTFEKYHQVSLLARFNQDLDKVAEISLVFSTGAVIGPKYKLRILRMKLRSLAHPERPQLCRYDLVLTENVETPFQPIVCQKLQM</sequence>
<proteinExistence type="evidence at transcript level"/>
<reference key="1">
    <citation type="journal article" date="2002" name="Invest. Ophthalmol. Vis. Sci.">
        <title>mRNA encoding a new lipolytic enzyme expressed in rabbit lacrimal glands.</title>
        <authorList>
            <person name="Remington S.G."/>
            <person name="Nelson J.D."/>
        </authorList>
    </citation>
    <scope>NUCLEOTIDE SEQUENCE [MRNA]</scope>
    <source>
        <tissue>Lacrimal gland</tissue>
    </source>
</reference>
<evidence type="ECO:0000250" key="1"/>
<evidence type="ECO:0000250" key="2">
    <source>
        <dbReference type="UniProtKB" id="Q8WWY8"/>
    </source>
</evidence>
<evidence type="ECO:0000255" key="3"/>
<evidence type="ECO:0000305" key="4"/>